<proteinExistence type="inferred from homology"/>
<reference key="1">
    <citation type="journal article" date="2008" name="J. Bacteriol.">
        <title>The pangenome structure of Escherichia coli: comparative genomic analysis of E. coli commensal and pathogenic isolates.</title>
        <authorList>
            <person name="Rasko D.A."/>
            <person name="Rosovitz M.J."/>
            <person name="Myers G.S.A."/>
            <person name="Mongodin E.F."/>
            <person name="Fricke W.F."/>
            <person name="Gajer P."/>
            <person name="Crabtree J."/>
            <person name="Sebaihia M."/>
            <person name="Thomson N.R."/>
            <person name="Chaudhuri R."/>
            <person name="Henderson I.R."/>
            <person name="Sperandio V."/>
            <person name="Ravel J."/>
        </authorList>
    </citation>
    <scope>NUCLEOTIDE SEQUENCE [LARGE SCALE GENOMIC DNA]</scope>
    <source>
        <strain>HS</strain>
    </source>
</reference>
<feature type="chain" id="PRO_1000059856" description="Small ribosomal subunit protein bS6">
    <location>
        <begin position="1"/>
        <end position="131"/>
    </location>
</feature>
<feature type="region of interest" description="Disordered" evidence="2">
    <location>
        <begin position="98"/>
        <end position="131"/>
    </location>
</feature>
<feature type="compositionally biased region" description="Basic and acidic residues" evidence="2">
    <location>
        <begin position="104"/>
        <end position="116"/>
    </location>
</feature>
<feature type="compositionally biased region" description="Acidic residues" evidence="2">
    <location>
        <begin position="120"/>
        <end position="131"/>
    </location>
</feature>
<feature type="modified residue" description="N6-acetyllysine" evidence="1">
    <location>
        <position position="93"/>
    </location>
</feature>
<keyword id="KW-0007">Acetylation</keyword>
<keyword id="KW-0687">Ribonucleoprotein</keyword>
<keyword id="KW-0689">Ribosomal protein</keyword>
<keyword id="KW-0694">RNA-binding</keyword>
<keyword id="KW-0699">rRNA-binding</keyword>
<comment type="function">
    <text evidence="1">Binds together with bS18 to 16S ribosomal RNA.</text>
</comment>
<comment type="similarity">
    <text evidence="1">Belongs to the bacterial ribosomal protein bS6 family.</text>
</comment>
<name>RS6_ECOHS</name>
<gene>
    <name evidence="1" type="primary">rpsF</name>
    <name type="ordered locus">EcHS_A4444</name>
</gene>
<dbReference type="EMBL" id="CP000802">
    <property type="protein sequence ID" value="ABV08600.1"/>
    <property type="molecule type" value="Genomic_DNA"/>
</dbReference>
<dbReference type="RefSeq" id="WP_001216676.1">
    <property type="nucleotide sequence ID" value="NC_009800.1"/>
</dbReference>
<dbReference type="SMR" id="A8A7U6"/>
<dbReference type="GeneID" id="93777623"/>
<dbReference type="KEGG" id="ecx:EcHS_A4444"/>
<dbReference type="HOGENOM" id="CLU_113441_6_1_6"/>
<dbReference type="GO" id="GO:0022627">
    <property type="term" value="C:cytosolic small ribosomal subunit"/>
    <property type="evidence" value="ECO:0007669"/>
    <property type="project" value="TreeGrafter"/>
</dbReference>
<dbReference type="GO" id="GO:0070181">
    <property type="term" value="F:small ribosomal subunit rRNA binding"/>
    <property type="evidence" value="ECO:0007669"/>
    <property type="project" value="TreeGrafter"/>
</dbReference>
<dbReference type="GO" id="GO:0003735">
    <property type="term" value="F:structural constituent of ribosome"/>
    <property type="evidence" value="ECO:0007669"/>
    <property type="project" value="InterPro"/>
</dbReference>
<dbReference type="GO" id="GO:0006412">
    <property type="term" value="P:translation"/>
    <property type="evidence" value="ECO:0007669"/>
    <property type="project" value="UniProtKB-UniRule"/>
</dbReference>
<dbReference type="CDD" id="cd00473">
    <property type="entry name" value="bS6"/>
    <property type="match status" value="1"/>
</dbReference>
<dbReference type="FunFam" id="3.30.70.60:FF:000003">
    <property type="entry name" value="30S ribosomal protein S6"/>
    <property type="match status" value="1"/>
</dbReference>
<dbReference type="Gene3D" id="3.30.70.60">
    <property type="match status" value="1"/>
</dbReference>
<dbReference type="HAMAP" id="MF_00360">
    <property type="entry name" value="Ribosomal_bS6"/>
    <property type="match status" value="1"/>
</dbReference>
<dbReference type="InterPro" id="IPR000529">
    <property type="entry name" value="Ribosomal_bS6"/>
</dbReference>
<dbReference type="InterPro" id="IPR020815">
    <property type="entry name" value="Ribosomal_bS6_CS"/>
</dbReference>
<dbReference type="InterPro" id="IPR035980">
    <property type="entry name" value="Ribosomal_bS6_sf"/>
</dbReference>
<dbReference type="InterPro" id="IPR020814">
    <property type="entry name" value="Ribosomal_S6_plastid/chlpt"/>
</dbReference>
<dbReference type="InterPro" id="IPR014717">
    <property type="entry name" value="Transl_elong_EF1B/ribsomal_bS6"/>
</dbReference>
<dbReference type="NCBIfam" id="TIGR00166">
    <property type="entry name" value="S6"/>
    <property type="match status" value="1"/>
</dbReference>
<dbReference type="PANTHER" id="PTHR21011">
    <property type="entry name" value="MITOCHONDRIAL 28S RIBOSOMAL PROTEIN S6"/>
    <property type="match status" value="1"/>
</dbReference>
<dbReference type="PANTHER" id="PTHR21011:SF1">
    <property type="entry name" value="SMALL RIBOSOMAL SUBUNIT PROTEIN BS6M"/>
    <property type="match status" value="1"/>
</dbReference>
<dbReference type="Pfam" id="PF01250">
    <property type="entry name" value="Ribosomal_S6"/>
    <property type="match status" value="1"/>
</dbReference>
<dbReference type="SUPFAM" id="SSF54995">
    <property type="entry name" value="Ribosomal protein S6"/>
    <property type="match status" value="1"/>
</dbReference>
<dbReference type="PROSITE" id="PS01048">
    <property type="entry name" value="RIBOSOMAL_S6"/>
    <property type="match status" value="1"/>
</dbReference>
<accession>A8A7U6</accession>
<protein>
    <recommendedName>
        <fullName evidence="1">Small ribosomal subunit protein bS6</fullName>
    </recommendedName>
    <alternativeName>
        <fullName evidence="3">30S ribosomal protein S6</fullName>
    </alternativeName>
</protein>
<sequence>MRHYEIVFMVHPDQSEQVPGMIERYTAAITGAEGKIHRLEDWGRRQLAYPINKLHKAHYVLMNVEAPQEVIDELETTFRFNDAVIRSMVMRTKHAVTEASPMVKAKDERRERRDDFANETADDAEAGDSEE</sequence>
<organism>
    <name type="scientific">Escherichia coli O9:H4 (strain HS)</name>
    <dbReference type="NCBI Taxonomy" id="331112"/>
    <lineage>
        <taxon>Bacteria</taxon>
        <taxon>Pseudomonadati</taxon>
        <taxon>Pseudomonadota</taxon>
        <taxon>Gammaproteobacteria</taxon>
        <taxon>Enterobacterales</taxon>
        <taxon>Enterobacteriaceae</taxon>
        <taxon>Escherichia</taxon>
    </lineage>
</organism>
<evidence type="ECO:0000255" key="1">
    <source>
        <dbReference type="HAMAP-Rule" id="MF_00360"/>
    </source>
</evidence>
<evidence type="ECO:0000256" key="2">
    <source>
        <dbReference type="SAM" id="MobiDB-lite"/>
    </source>
</evidence>
<evidence type="ECO:0000305" key="3"/>